<keyword id="KW-0002">3D-structure</keyword>
<keyword id="KW-0687">Ribonucleoprotein</keyword>
<keyword id="KW-0689">Ribosomal protein</keyword>
<keyword id="KW-0694">RNA-binding</keyword>
<keyword id="KW-0699">rRNA-binding</keyword>
<sequence>MAQQRRGGFKRRKKVDFIAANKIEVVDYKDTELLKRFISERGKILPRRVTGTSAKNQRKVVNAIKRARVMALLPFVAEDQN</sequence>
<evidence type="ECO:0000255" key="1">
    <source>
        <dbReference type="HAMAP-Rule" id="MF_00270"/>
    </source>
</evidence>
<evidence type="ECO:0000305" key="2"/>
<comment type="function">
    <text evidence="1">Binds as a heterodimer with protein bS6 to the central domain of the 16S rRNA, where it helps stabilize the platform of the 30S subunit.</text>
</comment>
<comment type="subunit">
    <text evidence="1">Part of the 30S ribosomal subunit. Forms a tight heterodimer with protein bS6.</text>
</comment>
<comment type="similarity">
    <text evidence="1">Belongs to the bacterial ribosomal protein bS18 family.</text>
</comment>
<name>RS18_LACLM</name>
<proteinExistence type="evidence at protein level"/>
<protein>
    <recommendedName>
        <fullName evidence="1">Small ribosomal subunit protein bS18</fullName>
    </recommendedName>
    <alternativeName>
        <fullName evidence="2">30S ribosomal protein S18</fullName>
    </alternativeName>
</protein>
<reference key="1">
    <citation type="journal article" date="2007" name="J. Bacteriol.">
        <title>The complete genome sequence of the lactic acid bacterial paradigm Lactococcus lactis subsp. cremoris MG1363.</title>
        <authorList>
            <person name="Wegmann U."/>
            <person name="O'Connell-Motherway M."/>
            <person name="Zomer A."/>
            <person name="Buist G."/>
            <person name="Shearman C."/>
            <person name="Canchaya C."/>
            <person name="Ventura M."/>
            <person name="Goesmann A."/>
            <person name="Gasson M.J."/>
            <person name="Kuipers O.P."/>
            <person name="van Sinderen D."/>
            <person name="Kok J."/>
        </authorList>
    </citation>
    <scope>NUCLEOTIDE SEQUENCE [LARGE SCALE GENOMIC DNA]</scope>
    <source>
        <strain>MG1363</strain>
    </source>
</reference>
<accession>A2RNZ2</accession>
<gene>
    <name evidence="1" type="primary">rpsR</name>
    <name type="ordered locus">llmg_2473</name>
</gene>
<organism>
    <name type="scientific">Lactococcus lactis subsp. cremoris (strain MG1363)</name>
    <dbReference type="NCBI Taxonomy" id="416870"/>
    <lineage>
        <taxon>Bacteria</taxon>
        <taxon>Bacillati</taxon>
        <taxon>Bacillota</taxon>
        <taxon>Bacilli</taxon>
        <taxon>Lactobacillales</taxon>
        <taxon>Streptococcaceae</taxon>
        <taxon>Lactococcus</taxon>
        <taxon>Lactococcus cremoris subsp. cremoris</taxon>
    </lineage>
</organism>
<feature type="chain" id="PRO_1000003519" description="Small ribosomal subunit protein bS18">
    <location>
        <begin position="1"/>
        <end position="81"/>
    </location>
</feature>
<dbReference type="EMBL" id="AM406671">
    <property type="protein sequence ID" value="CAL99037.1"/>
    <property type="molecule type" value="Genomic_DNA"/>
</dbReference>
<dbReference type="RefSeq" id="WP_003131952.1">
    <property type="nucleotide sequence ID" value="NZ_WJVF01000029.1"/>
</dbReference>
<dbReference type="PDB" id="5MYJ">
    <property type="method" value="EM"/>
    <property type="resolution" value="5.60 A"/>
    <property type="chains" value="AR=1-81"/>
</dbReference>
<dbReference type="PDBsum" id="5MYJ"/>
<dbReference type="EMDB" id="EMD-3581"/>
<dbReference type="SMR" id="A2RNZ2"/>
<dbReference type="STRING" id="416870.llmg_2473"/>
<dbReference type="GeneID" id="89634533"/>
<dbReference type="KEGG" id="llm:llmg_2473"/>
<dbReference type="eggNOG" id="COG0238">
    <property type="taxonomic scope" value="Bacteria"/>
</dbReference>
<dbReference type="HOGENOM" id="CLU_148710_2_2_9"/>
<dbReference type="OrthoDB" id="9812008at2"/>
<dbReference type="PhylomeDB" id="A2RNZ2"/>
<dbReference type="Proteomes" id="UP000000364">
    <property type="component" value="Chromosome"/>
</dbReference>
<dbReference type="GO" id="GO:0022627">
    <property type="term" value="C:cytosolic small ribosomal subunit"/>
    <property type="evidence" value="ECO:0007669"/>
    <property type="project" value="TreeGrafter"/>
</dbReference>
<dbReference type="GO" id="GO:0070181">
    <property type="term" value="F:small ribosomal subunit rRNA binding"/>
    <property type="evidence" value="ECO:0007669"/>
    <property type="project" value="TreeGrafter"/>
</dbReference>
<dbReference type="GO" id="GO:0003735">
    <property type="term" value="F:structural constituent of ribosome"/>
    <property type="evidence" value="ECO:0007669"/>
    <property type="project" value="InterPro"/>
</dbReference>
<dbReference type="GO" id="GO:0006412">
    <property type="term" value="P:translation"/>
    <property type="evidence" value="ECO:0007669"/>
    <property type="project" value="UniProtKB-UniRule"/>
</dbReference>
<dbReference type="FunFam" id="4.10.640.10:FF:000003">
    <property type="entry name" value="30S ribosomal protein S18"/>
    <property type="match status" value="1"/>
</dbReference>
<dbReference type="Gene3D" id="4.10.640.10">
    <property type="entry name" value="Ribosomal protein S18"/>
    <property type="match status" value="1"/>
</dbReference>
<dbReference type="HAMAP" id="MF_00270">
    <property type="entry name" value="Ribosomal_bS18"/>
    <property type="match status" value="1"/>
</dbReference>
<dbReference type="InterPro" id="IPR001648">
    <property type="entry name" value="Ribosomal_bS18"/>
</dbReference>
<dbReference type="InterPro" id="IPR018275">
    <property type="entry name" value="Ribosomal_bS18_CS"/>
</dbReference>
<dbReference type="InterPro" id="IPR036870">
    <property type="entry name" value="Ribosomal_bS18_sf"/>
</dbReference>
<dbReference type="NCBIfam" id="TIGR00165">
    <property type="entry name" value="S18"/>
    <property type="match status" value="1"/>
</dbReference>
<dbReference type="PANTHER" id="PTHR13479">
    <property type="entry name" value="30S RIBOSOMAL PROTEIN S18"/>
    <property type="match status" value="1"/>
</dbReference>
<dbReference type="PANTHER" id="PTHR13479:SF40">
    <property type="entry name" value="SMALL RIBOSOMAL SUBUNIT PROTEIN BS18M"/>
    <property type="match status" value="1"/>
</dbReference>
<dbReference type="Pfam" id="PF01084">
    <property type="entry name" value="Ribosomal_S18"/>
    <property type="match status" value="1"/>
</dbReference>
<dbReference type="PRINTS" id="PR00974">
    <property type="entry name" value="RIBOSOMALS18"/>
</dbReference>
<dbReference type="SUPFAM" id="SSF46911">
    <property type="entry name" value="Ribosomal protein S18"/>
    <property type="match status" value="1"/>
</dbReference>
<dbReference type="PROSITE" id="PS00057">
    <property type="entry name" value="RIBOSOMAL_S18"/>
    <property type="match status" value="1"/>
</dbReference>